<proteinExistence type="inferred from homology"/>
<keyword id="KW-0238">DNA-binding</keyword>
<keyword id="KW-1185">Reference proteome</keyword>
<name>SSB_BIFLO</name>
<evidence type="ECO:0000255" key="1">
    <source>
        <dbReference type="HAMAP-Rule" id="MF_00984"/>
    </source>
</evidence>
<evidence type="ECO:0000256" key="2">
    <source>
        <dbReference type="SAM" id="MobiDB-lite"/>
    </source>
</evidence>
<feature type="chain" id="PRO_0000096007" description="Single-stranded DNA-binding protein">
    <location>
        <begin position="1"/>
        <end position="218"/>
    </location>
</feature>
<feature type="domain" description="SSB" evidence="1">
    <location>
        <begin position="1"/>
        <end position="110"/>
    </location>
</feature>
<feature type="region of interest" description="Disordered" evidence="2">
    <location>
        <begin position="115"/>
        <end position="150"/>
    </location>
</feature>
<feature type="region of interest" description="Disordered" evidence="2">
    <location>
        <begin position="166"/>
        <end position="218"/>
    </location>
</feature>
<feature type="compositionally biased region" description="Gly residues" evidence="2">
    <location>
        <begin position="123"/>
        <end position="136"/>
    </location>
</feature>
<feature type="compositionally biased region" description="Low complexity" evidence="2">
    <location>
        <begin position="171"/>
        <end position="185"/>
    </location>
</feature>
<feature type="compositionally biased region" description="Low complexity" evidence="2">
    <location>
        <begin position="192"/>
        <end position="209"/>
    </location>
</feature>
<reference key="1">
    <citation type="journal article" date="2002" name="Proc. Natl. Acad. Sci. U.S.A.">
        <title>The genome sequence of Bifidobacterium longum reflects its adaptation to the human gastrointestinal tract.</title>
        <authorList>
            <person name="Schell M.A."/>
            <person name="Karmirantzou M."/>
            <person name="Snel B."/>
            <person name="Vilanova D."/>
            <person name="Berger B."/>
            <person name="Pessi G."/>
            <person name="Zwahlen M.-C."/>
            <person name="Desiere F."/>
            <person name="Bork P."/>
            <person name="Delley M."/>
            <person name="Pridmore R.D."/>
            <person name="Arigoni F."/>
        </authorList>
    </citation>
    <scope>NUCLEOTIDE SEQUENCE [LARGE SCALE GENOMIC DNA]</scope>
    <source>
        <strain>NCC 2705</strain>
    </source>
</reference>
<protein>
    <recommendedName>
        <fullName evidence="1">Single-stranded DNA-binding protein</fullName>
        <shortName evidence="1">SSB</shortName>
    </recommendedName>
</protein>
<accession>Q8G757</accession>
<comment type="subunit">
    <text evidence="1">Homotetramer.</text>
</comment>
<organism>
    <name type="scientific">Bifidobacterium longum (strain NCC 2705)</name>
    <dbReference type="NCBI Taxonomy" id="206672"/>
    <lineage>
        <taxon>Bacteria</taxon>
        <taxon>Bacillati</taxon>
        <taxon>Actinomycetota</taxon>
        <taxon>Actinomycetes</taxon>
        <taxon>Bifidobacteriales</taxon>
        <taxon>Bifidobacteriaceae</taxon>
        <taxon>Bifidobacterium</taxon>
    </lineage>
</organism>
<dbReference type="EMBL" id="AE014295">
    <property type="protein sequence ID" value="AAN24252.1"/>
    <property type="molecule type" value="Genomic_DNA"/>
</dbReference>
<dbReference type="RefSeq" id="NP_695616.1">
    <property type="nucleotide sequence ID" value="NC_004307.2"/>
</dbReference>
<dbReference type="RefSeq" id="WP_011068475.1">
    <property type="nucleotide sequence ID" value="NC_004307.2"/>
</dbReference>
<dbReference type="SMR" id="Q8G757"/>
<dbReference type="STRING" id="206672.BL0415"/>
<dbReference type="EnsemblBacteria" id="AAN24252">
    <property type="protein sequence ID" value="AAN24252"/>
    <property type="gene ID" value="BL0415"/>
</dbReference>
<dbReference type="KEGG" id="blo:BL0415"/>
<dbReference type="PATRIC" id="fig|206672.9.peg.1160"/>
<dbReference type="HOGENOM" id="CLU_078758_1_0_11"/>
<dbReference type="OrthoDB" id="9809878at2"/>
<dbReference type="PhylomeDB" id="Q8G757"/>
<dbReference type="Proteomes" id="UP000000439">
    <property type="component" value="Chromosome"/>
</dbReference>
<dbReference type="GO" id="GO:0009295">
    <property type="term" value="C:nucleoid"/>
    <property type="evidence" value="ECO:0007669"/>
    <property type="project" value="TreeGrafter"/>
</dbReference>
<dbReference type="GO" id="GO:0003697">
    <property type="term" value="F:single-stranded DNA binding"/>
    <property type="evidence" value="ECO:0007669"/>
    <property type="project" value="UniProtKB-UniRule"/>
</dbReference>
<dbReference type="GO" id="GO:0006260">
    <property type="term" value="P:DNA replication"/>
    <property type="evidence" value="ECO:0007669"/>
    <property type="project" value="InterPro"/>
</dbReference>
<dbReference type="CDD" id="cd04496">
    <property type="entry name" value="SSB_OBF"/>
    <property type="match status" value="1"/>
</dbReference>
<dbReference type="Gene3D" id="2.40.50.140">
    <property type="entry name" value="Nucleic acid-binding proteins"/>
    <property type="match status" value="1"/>
</dbReference>
<dbReference type="HAMAP" id="MF_00984">
    <property type="entry name" value="SSB"/>
    <property type="match status" value="1"/>
</dbReference>
<dbReference type="InterPro" id="IPR012340">
    <property type="entry name" value="NA-bd_OB-fold"/>
</dbReference>
<dbReference type="InterPro" id="IPR000424">
    <property type="entry name" value="Primosome_PriB/ssb"/>
</dbReference>
<dbReference type="InterPro" id="IPR011344">
    <property type="entry name" value="ssDNA-bd"/>
</dbReference>
<dbReference type="NCBIfam" id="NF005851">
    <property type="entry name" value="PRK07772.1"/>
    <property type="match status" value="1"/>
</dbReference>
<dbReference type="NCBIfam" id="TIGR00621">
    <property type="entry name" value="ssb"/>
    <property type="match status" value="1"/>
</dbReference>
<dbReference type="PANTHER" id="PTHR10302">
    <property type="entry name" value="SINGLE-STRANDED DNA-BINDING PROTEIN"/>
    <property type="match status" value="1"/>
</dbReference>
<dbReference type="PANTHER" id="PTHR10302:SF27">
    <property type="entry name" value="SINGLE-STRANDED DNA-BINDING PROTEIN"/>
    <property type="match status" value="1"/>
</dbReference>
<dbReference type="Pfam" id="PF00436">
    <property type="entry name" value="SSB"/>
    <property type="match status" value="1"/>
</dbReference>
<dbReference type="SUPFAM" id="SSF50249">
    <property type="entry name" value="Nucleic acid-binding proteins"/>
    <property type="match status" value="1"/>
</dbReference>
<dbReference type="PROSITE" id="PS50935">
    <property type="entry name" value="SSB"/>
    <property type="match status" value="1"/>
</dbReference>
<gene>
    <name type="primary">ssb</name>
    <name type="ordered locus">BL0415</name>
</gene>
<sequence>MAGETVITIVGNLTADPELRTIGSGVTVASFTIASTPRTWNRQTNQFEDGQALFMRCSAWRDLADHCAQSLKKGMRVIATGRLQQRSYQAQDGSQRTVVEMQLDEIGPSLRYATAQVTRQSSGQGGFQGRSGGFQGGQQPNQGYGNQGGQGGYAGGQGGYNGGYQGGGAGYSQQSAAPANPSAPAVDPWSNAGASDAGSFSTFGASSDFGGDDSDPEF</sequence>